<feature type="chain" id="PRO_0000180351" description="Nodulation protein E">
    <location>
        <begin position="1"/>
        <end position="401"/>
    </location>
</feature>
<feature type="transmembrane region" description="Helical" evidence="1">
    <location>
        <begin position="329"/>
        <end position="348"/>
    </location>
</feature>
<feature type="domain" description="Ketosynthase family 3 (KS3)" evidence="2">
    <location>
        <begin position="2"/>
        <end position="400"/>
    </location>
</feature>
<feature type="active site" description="For beta-ketoacyl synthase activity" evidence="2">
    <location>
        <position position="162"/>
    </location>
</feature>
<feature type="active site" description="For beta-ketoacyl synthase activity" evidence="2">
    <location>
        <position position="294"/>
    </location>
</feature>
<feature type="active site" description="For beta-ketoacyl synthase activity" evidence="2">
    <location>
        <position position="331"/>
    </location>
</feature>
<gene>
    <name type="primary">nodE</name>
    <name type="synonym">hsnB</name>
</gene>
<sequence length="401" mass="42001">MDRRVVITGIGGLCGLGTNAASIWKEMREGPSAISPIITTDLYDLEGTVGLEIKAIPEHDIPRKQLVSMDRFSLLAVIAATEAMKQAGLSCDEQNAHRFGAAMGLGGPGWDTIEETYRSILLDGVTRARIFTAPKGMPSAAAGHVSIFLGLRGPVFGVTSACAAGNHAIASAVDQIRLGRADVMLAGGSDAPLTWGVLKSWEALRVLAPDTCRPFSADRKGVVLGEGAGMAVLESYEHAAARGATMLAEVAGIGLSGDAYDIVMPSIEGPEAAMRSCLADAELNPDDVDYLNAHGTGTVANDEMETAAIKRVFGDHAFQMSVSSTKSMHAHCLGAASALEMIACVMAIQEGVIPPTANYREPDPQCDLDVTPNVPREQRCGSMSNAFAMGGTNAVLAFRQV</sequence>
<evidence type="ECO:0000255" key="1"/>
<evidence type="ECO:0000255" key="2">
    <source>
        <dbReference type="PROSITE-ProRule" id="PRU01348"/>
    </source>
</evidence>
<evidence type="ECO:0000305" key="3"/>
<comment type="function">
    <text>Proposed to synthesize NOD factor fatty acyl chain. Involved in the synthesis of a highly unsaturated fatty acid moiety, which forms part of a lipo-oligosaccharide that is responsible for host specificity.</text>
</comment>
<comment type="subcellular location">
    <subcellularLocation>
        <location>Cell inner membrane</location>
    </subcellularLocation>
</comment>
<comment type="similarity">
    <text evidence="3">Belongs to the thiolase-like superfamily. Beta-ketoacyl-ACP synthases family.</text>
</comment>
<organism>
    <name type="scientific">Rhizobium leguminosarum bv. trifolii</name>
    <dbReference type="NCBI Taxonomy" id="386"/>
    <lineage>
        <taxon>Bacteria</taxon>
        <taxon>Pseudomonadati</taxon>
        <taxon>Pseudomonadota</taxon>
        <taxon>Alphaproteobacteria</taxon>
        <taxon>Hyphomicrobiales</taxon>
        <taxon>Rhizobiaceae</taxon>
        <taxon>Rhizobium/Agrobacterium group</taxon>
        <taxon>Rhizobium</taxon>
    </lineage>
</organism>
<reference key="1">
    <citation type="journal article" date="1989" name="EMBO J.">
        <title>Genetic analysis and cellular localization of the Rhizobium host specificity-determining NodE protein.</title>
        <authorList>
            <person name="Spaink H.P."/>
            <person name="Weinman J."/>
            <person name="Djordjevic M.A."/>
            <person name="Wijffelman C.A."/>
            <person name="Okker R.J.H."/>
            <person name="Lugtenberg B.J.J."/>
        </authorList>
    </citation>
    <scope>NUCLEOTIDE SEQUENCE [GENOMIC DNA]</scope>
    <source>
        <strain>ANU 843</strain>
    </source>
</reference>
<reference key="2">
    <citation type="journal article" date="1986" name="Nucleic Acids Res.">
        <title>DNA sequence of Rhizobium trifolii nodulation genes reveals a reiterated and potentially regulatory sequence preceding nodABC and nodFE.</title>
        <authorList>
            <person name="Schofield P.R."/>
            <person name="Watson J.M."/>
        </authorList>
    </citation>
    <scope>NUCLEOTIDE SEQUENCE [GENOMIC DNA] OF 1-42</scope>
    <source>
        <strain>ANU 843</strain>
    </source>
</reference>
<keyword id="KW-0997">Cell inner membrane</keyword>
<keyword id="KW-1003">Cell membrane</keyword>
<keyword id="KW-0472">Membrane</keyword>
<keyword id="KW-0536">Nodulation</keyword>
<keyword id="KW-0614">Plasmid</keyword>
<keyword id="KW-0808">Transferase</keyword>
<keyword id="KW-0812">Transmembrane</keyword>
<keyword id="KW-1133">Transmembrane helix</keyword>
<protein>
    <recommendedName>
        <fullName>Nodulation protein E</fullName>
    </recommendedName>
    <alternativeName>
        <fullName>Host-specificity of nodulation protein B</fullName>
        <ecNumber>2.3.1.-</ecNumber>
    </alternativeName>
</protein>
<accession>P04684</accession>
<proteinExistence type="inferred from homology"/>
<name>NODE_RHILT</name>
<geneLocation type="plasmid">
    <name>sym pRtr843e</name>
</geneLocation>
<dbReference type="EC" id="2.3.1.-"/>
<dbReference type="EMBL" id="X16620">
    <property type="protein sequence ID" value="CAA34617.1"/>
    <property type="molecule type" value="Genomic_DNA"/>
</dbReference>
<dbReference type="EMBL" id="X03721">
    <property type="protein sequence ID" value="CAA27356.1"/>
    <property type="molecule type" value="Genomic_DNA"/>
</dbReference>
<dbReference type="PIR" id="S06021">
    <property type="entry name" value="S06021"/>
</dbReference>
<dbReference type="SMR" id="P04684"/>
<dbReference type="GO" id="GO:0005886">
    <property type="term" value="C:plasma membrane"/>
    <property type="evidence" value="ECO:0007669"/>
    <property type="project" value="UniProtKB-SubCell"/>
</dbReference>
<dbReference type="GO" id="GO:0004315">
    <property type="term" value="F:3-oxoacyl-[acyl-carrier-protein] synthase activity"/>
    <property type="evidence" value="ECO:0007669"/>
    <property type="project" value="InterPro"/>
</dbReference>
<dbReference type="GO" id="GO:0006633">
    <property type="term" value="P:fatty acid biosynthetic process"/>
    <property type="evidence" value="ECO:0007669"/>
    <property type="project" value="InterPro"/>
</dbReference>
<dbReference type="CDD" id="cd00834">
    <property type="entry name" value="KAS_I_II"/>
    <property type="match status" value="1"/>
</dbReference>
<dbReference type="Gene3D" id="3.40.47.10">
    <property type="match status" value="1"/>
</dbReference>
<dbReference type="InterPro" id="IPR000794">
    <property type="entry name" value="Beta-ketoacyl_synthase"/>
</dbReference>
<dbReference type="InterPro" id="IPR018201">
    <property type="entry name" value="Ketoacyl_synth_AS"/>
</dbReference>
<dbReference type="InterPro" id="IPR014031">
    <property type="entry name" value="Ketoacyl_synth_C"/>
</dbReference>
<dbReference type="InterPro" id="IPR014030">
    <property type="entry name" value="Ketoacyl_synth_N"/>
</dbReference>
<dbReference type="InterPro" id="IPR020841">
    <property type="entry name" value="PKS_Beta-ketoAc_synthase_dom"/>
</dbReference>
<dbReference type="InterPro" id="IPR016039">
    <property type="entry name" value="Thiolase-like"/>
</dbReference>
<dbReference type="NCBIfam" id="NF005589">
    <property type="entry name" value="PRK07314.1"/>
    <property type="match status" value="1"/>
</dbReference>
<dbReference type="PANTHER" id="PTHR11712:SF352">
    <property type="entry name" value="3-OXOACYL-[ACYL-CARRIER-PROTEIN] SYNTHASE"/>
    <property type="match status" value="1"/>
</dbReference>
<dbReference type="PANTHER" id="PTHR11712">
    <property type="entry name" value="POLYKETIDE SYNTHASE-RELATED"/>
    <property type="match status" value="1"/>
</dbReference>
<dbReference type="Pfam" id="PF00109">
    <property type="entry name" value="ketoacyl-synt"/>
    <property type="match status" value="1"/>
</dbReference>
<dbReference type="Pfam" id="PF02801">
    <property type="entry name" value="Ketoacyl-synt_C"/>
    <property type="match status" value="1"/>
</dbReference>
<dbReference type="SMART" id="SM00825">
    <property type="entry name" value="PKS_KS"/>
    <property type="match status" value="1"/>
</dbReference>
<dbReference type="SUPFAM" id="SSF53901">
    <property type="entry name" value="Thiolase-like"/>
    <property type="match status" value="1"/>
</dbReference>
<dbReference type="PROSITE" id="PS00606">
    <property type="entry name" value="KS3_1"/>
    <property type="match status" value="1"/>
</dbReference>
<dbReference type="PROSITE" id="PS52004">
    <property type="entry name" value="KS3_2"/>
    <property type="match status" value="1"/>
</dbReference>